<organism>
    <name type="scientific">Oryza sativa subsp. japonica</name>
    <name type="common">Rice</name>
    <dbReference type="NCBI Taxonomy" id="39947"/>
    <lineage>
        <taxon>Eukaryota</taxon>
        <taxon>Viridiplantae</taxon>
        <taxon>Streptophyta</taxon>
        <taxon>Embryophyta</taxon>
        <taxon>Tracheophyta</taxon>
        <taxon>Spermatophyta</taxon>
        <taxon>Magnoliopsida</taxon>
        <taxon>Liliopsida</taxon>
        <taxon>Poales</taxon>
        <taxon>Poaceae</taxon>
        <taxon>BOP clade</taxon>
        <taxon>Oryzoideae</taxon>
        <taxon>Oryzeae</taxon>
        <taxon>Oryzinae</taxon>
        <taxon>Oryza</taxon>
        <taxon>Oryza sativa</taxon>
    </lineage>
</organism>
<sequence>MAVGNGLILYHILGLASCIALVYFSLGEVDLRDALPSLPFSGGASRAAAASLPFVERRGKRLFLDGRPFYINGWNSYWLMDLAVEPNTRPRVSSMFRTAVSMGLTVCRTWAFNDGSYNALQLSPGHFDERVFKALDRVVAEASEHGVRLILSLANNLDAYGGKRQYVRWAWEEGVGLTASNDSFFFDPAIRDYFKVYLKTLLMRKNHLTGLEYRDDPTILAWELMNEPRCTSDPSGDTLQRWMEEMSAYVKSIDKKHLLTVGTEGFYGPTSSQEKLNINPGEWFPNNYGADFIRNSKIQDIDFASVHVYPDNWLQHASLDEKLKFMTRWITAHVEDGDGELEKPVLVTEFGLSHQVEGFEDAHRDVLYRAVYDIVHGSARRGGAAGGALVWQLAAEGMEEYHDGFSIVPSERPSMMRLIKEQSCRLAAVRYGEEGARKVLKTVCA</sequence>
<comment type="catalytic activity">
    <reaction>
        <text>Random hydrolysis of (1-&gt;4)-beta-D-mannosidic linkages in mannans, galactomannans and glucomannans.</text>
        <dbReference type="EC" id="3.2.1.78"/>
    </reaction>
</comment>
<comment type="subcellular location">
    <subcellularLocation>
        <location evidence="5">Secreted</location>
    </subcellularLocation>
</comment>
<comment type="tissue specificity">
    <text evidence="4">Expressed in stems and seeds, and at lower levels in roots and leaves.</text>
</comment>
<comment type="similarity">
    <text evidence="5">Belongs to the glycosyl hydrolase 5 (cellulase A) family.</text>
</comment>
<feature type="signal peptide" evidence="3">
    <location>
        <begin position="1"/>
        <end position="27"/>
    </location>
</feature>
<feature type="chain" id="PRO_0000277483" description="Mannan endo-1,4-beta-mannosidase 2">
    <location>
        <begin position="28"/>
        <end position="445"/>
    </location>
</feature>
<feature type="active site" description="Proton donor" evidence="2">
    <location>
        <position position="227"/>
    </location>
</feature>
<feature type="active site" description="Nucleophile" evidence="2">
    <location>
        <position position="349"/>
    </location>
</feature>
<feature type="binding site" evidence="1">
    <location>
        <position position="110"/>
    </location>
    <ligand>
        <name>substrate</name>
    </ligand>
</feature>
<feature type="binding site" evidence="1">
    <location>
        <position position="226"/>
    </location>
    <ligand>
        <name>substrate</name>
    </ligand>
</feature>
<feature type="binding site" evidence="1">
    <location>
        <position position="309"/>
    </location>
    <ligand>
        <name>substrate</name>
    </ligand>
</feature>
<feature type="binding site" evidence="1">
    <location>
        <position position="391"/>
    </location>
    <ligand>
        <name>substrate</name>
    </ligand>
</feature>
<feature type="glycosylation site" description="N-linked (GlcNAc...) asparagine" evidence="3">
    <location>
        <position position="181"/>
    </location>
</feature>
<accession>Q0JJD4</accession>
<accession>A0A0N7KDR1</accession>
<accession>Q94J47</accession>
<reference key="1">
    <citation type="journal article" date="2002" name="Nature">
        <title>The genome sequence and structure of rice chromosome 1.</title>
        <authorList>
            <person name="Sasaki T."/>
            <person name="Matsumoto T."/>
            <person name="Yamamoto K."/>
            <person name="Sakata K."/>
            <person name="Baba T."/>
            <person name="Katayose Y."/>
            <person name="Wu J."/>
            <person name="Niimura Y."/>
            <person name="Cheng Z."/>
            <person name="Nagamura Y."/>
            <person name="Antonio B.A."/>
            <person name="Kanamori H."/>
            <person name="Hosokawa S."/>
            <person name="Masukawa M."/>
            <person name="Arikawa K."/>
            <person name="Chiden Y."/>
            <person name="Hayashi M."/>
            <person name="Okamoto M."/>
            <person name="Ando T."/>
            <person name="Aoki H."/>
            <person name="Arita K."/>
            <person name="Hamada M."/>
            <person name="Harada C."/>
            <person name="Hijishita S."/>
            <person name="Honda M."/>
            <person name="Ichikawa Y."/>
            <person name="Idonuma A."/>
            <person name="Iijima M."/>
            <person name="Ikeda M."/>
            <person name="Ikeno M."/>
            <person name="Ito S."/>
            <person name="Ito T."/>
            <person name="Ito Y."/>
            <person name="Ito Y."/>
            <person name="Iwabuchi A."/>
            <person name="Kamiya K."/>
            <person name="Karasawa W."/>
            <person name="Katagiri S."/>
            <person name="Kikuta A."/>
            <person name="Kobayashi N."/>
            <person name="Kono I."/>
            <person name="Machita K."/>
            <person name="Maehara T."/>
            <person name="Mizuno H."/>
            <person name="Mizubayashi T."/>
            <person name="Mukai Y."/>
            <person name="Nagasaki H."/>
            <person name="Nakashima M."/>
            <person name="Nakama Y."/>
            <person name="Nakamichi Y."/>
            <person name="Nakamura M."/>
            <person name="Namiki N."/>
            <person name="Negishi M."/>
            <person name="Ohta I."/>
            <person name="Ono N."/>
            <person name="Saji S."/>
            <person name="Sakai K."/>
            <person name="Shibata M."/>
            <person name="Shimokawa T."/>
            <person name="Shomura A."/>
            <person name="Song J."/>
            <person name="Takazaki Y."/>
            <person name="Terasawa K."/>
            <person name="Tsuji K."/>
            <person name="Waki K."/>
            <person name="Yamagata H."/>
            <person name="Yamane H."/>
            <person name="Yoshiki S."/>
            <person name="Yoshihara R."/>
            <person name="Yukawa K."/>
            <person name="Zhong H."/>
            <person name="Iwama H."/>
            <person name="Endo T."/>
            <person name="Ito H."/>
            <person name="Hahn J.H."/>
            <person name="Kim H.-I."/>
            <person name="Eun M.-Y."/>
            <person name="Yano M."/>
            <person name="Jiang J."/>
            <person name="Gojobori T."/>
        </authorList>
    </citation>
    <scope>NUCLEOTIDE SEQUENCE [LARGE SCALE GENOMIC DNA]</scope>
    <source>
        <strain>cv. Nipponbare</strain>
    </source>
</reference>
<reference key="2">
    <citation type="journal article" date="2005" name="Nature">
        <title>The map-based sequence of the rice genome.</title>
        <authorList>
            <consortium name="International rice genome sequencing project (IRGSP)"/>
        </authorList>
    </citation>
    <scope>NUCLEOTIDE SEQUENCE [LARGE SCALE GENOMIC DNA]</scope>
    <source>
        <strain>cv. Nipponbare</strain>
    </source>
</reference>
<reference key="3">
    <citation type="journal article" date="2008" name="Nucleic Acids Res.">
        <title>The rice annotation project database (RAP-DB): 2008 update.</title>
        <authorList>
            <consortium name="The rice annotation project (RAP)"/>
        </authorList>
    </citation>
    <scope>GENOME REANNOTATION</scope>
    <source>
        <strain>cv. Nipponbare</strain>
    </source>
</reference>
<reference key="4">
    <citation type="journal article" date="2013" name="Rice">
        <title>Improvement of the Oryza sativa Nipponbare reference genome using next generation sequence and optical map data.</title>
        <authorList>
            <person name="Kawahara Y."/>
            <person name="de la Bastide M."/>
            <person name="Hamilton J.P."/>
            <person name="Kanamori H."/>
            <person name="McCombie W.R."/>
            <person name="Ouyang S."/>
            <person name="Schwartz D.C."/>
            <person name="Tanaka T."/>
            <person name="Wu J."/>
            <person name="Zhou S."/>
            <person name="Childs K.L."/>
            <person name="Davidson R.M."/>
            <person name="Lin H."/>
            <person name="Quesada-Ocampo L."/>
            <person name="Vaillancourt B."/>
            <person name="Sakai H."/>
            <person name="Lee S.S."/>
            <person name="Kim J."/>
            <person name="Numa H."/>
            <person name="Itoh T."/>
            <person name="Buell C.R."/>
            <person name="Matsumoto T."/>
        </authorList>
    </citation>
    <scope>GENOME REANNOTATION</scope>
    <source>
        <strain>cv. Nipponbare</strain>
    </source>
</reference>
<reference key="5">
    <citation type="journal article" date="2007" name="Funct. Integr. Genomics">
        <title>The endo-beta-mannanase gene families in Arabidopsis, rice, and poplar.</title>
        <authorList>
            <person name="Yuan J.S."/>
            <person name="Yang X."/>
            <person name="Lai J."/>
            <person name="Lin H."/>
            <person name="Cheng Z.-M."/>
            <person name="Nonogaki H."/>
            <person name="Chen F."/>
        </authorList>
    </citation>
    <scope>GENE FAMILY</scope>
    <scope>TISSUE SPECIFICITY</scope>
</reference>
<protein>
    <recommendedName>
        <fullName>Mannan endo-1,4-beta-mannosidase 2</fullName>
        <ecNumber>3.2.1.78</ecNumber>
    </recommendedName>
    <alternativeName>
        <fullName>Beta-mannanase 2</fullName>
    </alternativeName>
    <alternativeName>
        <fullName>Endo-beta-1,4-mannanase 2</fullName>
    </alternativeName>
    <alternativeName>
        <fullName>OsMAN2</fullName>
    </alternativeName>
</protein>
<dbReference type="EC" id="3.2.1.78"/>
<dbReference type="EMBL" id="AP003076">
    <property type="protein sequence ID" value="BAB56016.1"/>
    <property type="molecule type" value="Genomic_DNA"/>
</dbReference>
<dbReference type="EMBL" id="AP003376">
    <property type="protein sequence ID" value="BAC05600.1"/>
    <property type="molecule type" value="Genomic_DNA"/>
</dbReference>
<dbReference type="EMBL" id="AP008207">
    <property type="protein sequence ID" value="BAF06144.2"/>
    <property type="molecule type" value="Genomic_DNA"/>
</dbReference>
<dbReference type="EMBL" id="AP014957">
    <property type="protein sequence ID" value="BAS74321.1"/>
    <property type="molecule type" value="Genomic_DNA"/>
</dbReference>
<dbReference type="RefSeq" id="XP_015626424.1">
    <property type="nucleotide sequence ID" value="XM_015770938.1"/>
</dbReference>
<dbReference type="SMR" id="Q0JJD4"/>
<dbReference type="FunCoup" id="Q0JJD4">
    <property type="interactions" value="67"/>
</dbReference>
<dbReference type="STRING" id="39947.Q0JJD4"/>
<dbReference type="CAZy" id="GH5">
    <property type="family name" value="Glycoside Hydrolase Family 5"/>
</dbReference>
<dbReference type="GlyCosmos" id="Q0JJD4">
    <property type="glycosylation" value="1 site, No reported glycans"/>
</dbReference>
<dbReference type="PaxDb" id="39947-Q0JJD4"/>
<dbReference type="EnsemblPlants" id="Os01t0746700-00">
    <property type="protein sequence ID" value="Os01t0746700-00"/>
    <property type="gene ID" value="Os01g0746700"/>
</dbReference>
<dbReference type="Gramene" id="Os01t0746700-00">
    <property type="protein sequence ID" value="Os01t0746700-00"/>
    <property type="gene ID" value="Os01g0746700"/>
</dbReference>
<dbReference type="KEGG" id="dosa:Os01g0746700"/>
<dbReference type="eggNOG" id="ENOG502QS4Q">
    <property type="taxonomic scope" value="Eukaryota"/>
</dbReference>
<dbReference type="HOGENOM" id="CLU_031603_0_0_1"/>
<dbReference type="InParanoid" id="Q0JJD4"/>
<dbReference type="OMA" id="YHDGFSI"/>
<dbReference type="OrthoDB" id="406631at2759"/>
<dbReference type="Proteomes" id="UP000000763">
    <property type="component" value="Chromosome 1"/>
</dbReference>
<dbReference type="Proteomes" id="UP000059680">
    <property type="component" value="Chromosome 1"/>
</dbReference>
<dbReference type="GO" id="GO:0005576">
    <property type="term" value="C:extracellular region"/>
    <property type="evidence" value="ECO:0007669"/>
    <property type="project" value="UniProtKB-SubCell"/>
</dbReference>
<dbReference type="GO" id="GO:0016985">
    <property type="term" value="F:mannan endo-1,4-beta-mannosidase activity"/>
    <property type="evidence" value="ECO:0000318"/>
    <property type="project" value="GO_Central"/>
</dbReference>
<dbReference type="GO" id="GO:0000272">
    <property type="term" value="P:polysaccharide catabolic process"/>
    <property type="evidence" value="ECO:0007669"/>
    <property type="project" value="InterPro"/>
</dbReference>
<dbReference type="FunFam" id="3.20.20.80:FF:000012">
    <property type="entry name" value="Mannan endo-1,4-beta-mannosidase 6"/>
    <property type="match status" value="1"/>
</dbReference>
<dbReference type="Gene3D" id="3.20.20.80">
    <property type="entry name" value="Glycosidases"/>
    <property type="match status" value="1"/>
</dbReference>
<dbReference type="InterPro" id="IPR001547">
    <property type="entry name" value="Glyco_hydro_5"/>
</dbReference>
<dbReference type="InterPro" id="IPR018087">
    <property type="entry name" value="Glyco_hydro_5_CS"/>
</dbReference>
<dbReference type="InterPro" id="IPR017853">
    <property type="entry name" value="Glycoside_hydrolase_SF"/>
</dbReference>
<dbReference type="InterPro" id="IPR045053">
    <property type="entry name" value="MAN-like"/>
</dbReference>
<dbReference type="PANTHER" id="PTHR31451">
    <property type="match status" value="1"/>
</dbReference>
<dbReference type="PANTHER" id="PTHR31451:SF45">
    <property type="entry name" value="MANNAN ENDO-1,4-BETA-MANNOSIDASE 2"/>
    <property type="match status" value="1"/>
</dbReference>
<dbReference type="Pfam" id="PF00150">
    <property type="entry name" value="Cellulase"/>
    <property type="match status" value="1"/>
</dbReference>
<dbReference type="SUPFAM" id="SSF51445">
    <property type="entry name" value="(Trans)glycosidases"/>
    <property type="match status" value="1"/>
</dbReference>
<dbReference type="PROSITE" id="PS00659">
    <property type="entry name" value="GLYCOSYL_HYDROL_F5"/>
    <property type="match status" value="1"/>
</dbReference>
<proteinExistence type="evidence at transcript level"/>
<name>MAN2_ORYSJ</name>
<evidence type="ECO:0000250" key="1">
    <source>
        <dbReference type="UniProtKB" id="B4XC07"/>
    </source>
</evidence>
<evidence type="ECO:0000250" key="2">
    <source>
        <dbReference type="UniProtKB" id="Q99036"/>
    </source>
</evidence>
<evidence type="ECO:0000255" key="3"/>
<evidence type="ECO:0000269" key="4">
    <source>
    </source>
</evidence>
<evidence type="ECO:0000305" key="5"/>
<gene>
    <name type="primary">MAN2</name>
    <name type="ordered locus">Os01g0746700</name>
    <name type="ordered locus">LOC_Os01g54300</name>
    <name type="ORF">OSJNBa0014K08.42</name>
    <name type="ORF">P0481E12.1</name>
</gene>
<keyword id="KW-0325">Glycoprotein</keyword>
<keyword id="KW-0326">Glycosidase</keyword>
<keyword id="KW-0378">Hydrolase</keyword>
<keyword id="KW-1185">Reference proteome</keyword>
<keyword id="KW-0964">Secreted</keyword>
<keyword id="KW-0732">Signal</keyword>